<proteinExistence type="evidence at transcript level"/>
<accession>Q9R001</accession>
<accession>B2RRX9</accession>
<sequence length="930" mass="101844">MRLEWAPLLLLLLLLSASCLSLAADSPAAAPAQDKTRQPQAAAAAAEPDQPQGEETRERGHLQPLAGQRRSGGLVQNIDQLYSGGGKVGYLVYAGGRRFLLDLERDDTVGAAGSIVTAGGGLSASSGHRGHCFYRGTVDGSPRSLAVFDLCGGLDGFFAVKHARYTLKPLLRGSWAEYERIYGDGSSRILHVYNREGFSFEALPPRASCETPASPSGPQESPSVHSRSRRRSALAPQLLDHSAFSPSGNAGPQTWWRRRRRSISRARQVELLLVADSSMARMYGRGLQHYLLTLASIANRLYSHASIENHIRLAVVKVVVLTDKDTSLEVSKNAATTLKNFCKWQHQHNQLGDDHEEHYDAAILFTREDLCGHHSCDTLGMADVGTICSPERSCAVIEDDGLHAAFTVAHEIGHLLGLSHDDSKFCEENFGTTEDKRLMSSILTSIDASKPWSKCTSATITEFLDDGHGNCLLDLPRKQILGPEELPGQTYDATQQCNLTFGPEYSVCPGMDVCARLWCAVVRQGQMVCLTKKLPAVEGTPCGKGRVCLQGKCVDKTKKKYYSTSSHGNWGSWGPWGQCSRSCGGGVQFAYRHCNNPAPRNSGRYCTGKRAIYRSCSVTPCPPNGKSFRHEQCEAKNGYQSDAKGVKTFVEWVPKYAGVLPADVCKLTCRAKGTGYYVVFSPKVTDGTECRPYSNSVCVRGRCVRTGCDGIIGSKLQYDKCGVCGGDNSSCTKIIGTFNKKSKGYTDVVRIPEGATHIKVRQFKAKDQTRFTAYLALKKKTGEYLINGKYMISTSETIIDINGTVMNYSGWSHRDDFLHGMGYSATKEILIVQILATDPTKALDVRYSFFVPKKTTQKVNSVISHGSNKVGPHSTQLQWVTGPWLACSRTCDTGWHTRTVQCQDGNRKLAKGCLLSQRPSAFKQCLLKKC</sequence>
<comment type="function">
    <text evidence="9 10 11 12">Metalloproteinase that plays an important role in connective tissue organization, development, inflammation and cell migration. Extracellular matrix (ECM) degrading enzyme that shows proteolytic activity toward the hyalectan group of chondroitin sulfate proteoglycans (CSPGs) including ACAN, VCAN, BCAN and NCAN. Cleavage within the hyalectans occurs at Glu-Xaa recognition motifs. Plays a role in embryonic development, including limb and cardiac morphogenesis, and skeletal muscle development through its VCAN remodeling properties. Cleaves VCAN in the pericellular matrix surrounding myoblasts, facilitating myoblast contact and fusion which is required for skeletal muscle development and regeneration (PubMed:23233679). Participates in the development of brown adipose tissue and browning of white adipose tissue (PubMed:28702327). Plays an important role for T-lymphocyte migration from draining lymph nodes following viral infection (PubMed:27855162).</text>
</comment>
<comment type="cofactor">
    <cofactor evidence="2">
        <name>Zn(2+)</name>
        <dbReference type="ChEBI" id="CHEBI:29105"/>
    </cofactor>
    <text evidence="2">Binds 1 zinc ion per subunit.</text>
</comment>
<comment type="subcellular location">
    <subcellularLocation>
        <location evidence="2">Secreted</location>
        <location evidence="2">Extracellular space</location>
        <location evidence="2">Extracellular matrix</location>
    </subcellularLocation>
</comment>
<comment type="tissue specificity">
    <text evidence="10">Expressed in skeletal muscle.</text>
</comment>
<comment type="developmental stage">
    <text evidence="8 10">Expressed specifically in the peri-implantation period in embryo and trophoblast and at low or undetectable level thereafter (PubMed:10464288). In embryonic skeletal muscle, levels significantly increase between 13.5 dpc and 15.5 dpc with maximal expression observed at 15.5 dpc (PubMed:23233679). Decreased levels in postnatal skeletal muscle (PubMed:23233679). In myoblasts, up-regulated soon after induction of myoblast differentiation (PubMed:23233679).</text>
</comment>
<comment type="domain">
    <text>The spacer domain and the TSP type-1 domains are important for a tight interaction with the extracellular matrix.</text>
</comment>
<comment type="domain">
    <text>The conserved cysteine present in the cysteine-switch motif binds the catalytic zinc ion, thus inhibiting the enzyme. The dissociation of the cysteine from the zinc ion upon the activation-peptide release activates the enzyme.</text>
</comment>
<comment type="PTM">
    <text evidence="2">The precursor is cleaved by furin and PCSK7 outside of the cell.</text>
</comment>
<comment type="PTM">
    <text evidence="1">Glycosylated. Can be O-fucosylated by POFUT2 on a serine or a threonine residue found within the consensus sequence C1-X(2)-(S/T)-C2-G of the TSP type-1 repeat domains where C1 and C2 are the first and second cysteine residue of the repeat, respectively. Fucosylated repeats can then be further glycosylated by the addition of a beta-1,3-glucose residue by the glucosyltransferase, B3GALTL. Fucosylation mediates the efficient secretion of ADAMTS family members. Can also be C-glycosylated with one or two mannose molecules on tryptophan residues within the consensus sequence W-X-X-W of the TPRs, and N-glycosylated. These other glycosylations can also facilitate secretion (By similarity).</text>
</comment>
<comment type="disruption phenotype">
    <text evidence="9 10 11 12">Mice are viable and fertile (PubMed:15800625). Significantly increased mass of brown adipose tissue (PubMed:28702327). Delayed virus clearance and compromised T cell migration during viral infection (PubMed:27855162). No effect on VCAN cleavage in embryonic skeletal muscle, potentially as a result of participation by other proteinases, but absence of VCAN cleavage and greater number of centrally located nuclei in postnatal skeletal muscle (PubMed:23233679).</text>
</comment>
<reference key="1">
    <citation type="journal article" date="1999" name="J. Biol. Chem.">
        <title>ADAM-TS5, ADAM-TS6, and ADAM-TS7, novel members of a new family of zinc metalloproteases.</title>
        <authorList>
            <person name="Hurskainen T.L."/>
            <person name="Hirohata S."/>
            <person name="Seldin M.F."/>
            <person name="Apte S.S."/>
        </authorList>
    </citation>
    <scope>NUCLEOTIDE SEQUENCE [MRNA]</scope>
    <scope>DEVELOPMENTAL STAGE</scope>
</reference>
<reference key="2">
    <citation type="journal article" date="2004" name="Genome Res.">
        <title>The status, quality, and expansion of the NIH full-length cDNA project: the Mammalian Gene Collection (MGC).</title>
        <authorList>
            <consortium name="The MGC Project Team"/>
        </authorList>
    </citation>
    <scope>NUCLEOTIDE SEQUENCE [LARGE SCALE MRNA]</scope>
    <source>
        <tissue>Brain</tissue>
    </source>
</reference>
<reference key="3">
    <citation type="journal article" date="2005" name="Nature">
        <title>ADAMTS5 is the major aggrecanase in mouse cartilage in vivo and in vitro.</title>
        <authorList>
            <person name="Stanton H."/>
            <person name="Rogerson F.M."/>
            <person name="East C.J."/>
            <person name="Golub S.B."/>
            <person name="Lawlor K.E."/>
            <person name="Meeker C.T."/>
            <person name="Little C.B."/>
            <person name="Last K."/>
            <person name="Farmer P.J."/>
            <person name="Campbell I.K."/>
            <person name="Fourie A.M."/>
            <person name="Fosang A.J."/>
        </authorList>
    </citation>
    <scope>FUNCTION</scope>
    <scope>DISRUPTION PHENOTYPE</scope>
</reference>
<reference key="4">
    <citation type="journal article" date="2013" name="J. Biol. Chem.">
        <title>Versican processing by a disintegrin-like and metalloproteinase domain with thrombospondin-1 repeats proteinases-5 and -15 facilitates myoblast fusion.</title>
        <authorList>
            <person name="Stupka N."/>
            <person name="Kintakas C."/>
            <person name="White J.D."/>
            <person name="Fraser F.W."/>
            <person name="Hanciu M."/>
            <person name="Aramaki-Hattori N."/>
            <person name="Martin S."/>
            <person name="Coles C."/>
            <person name="Collier F."/>
            <person name="Ward A.C."/>
            <person name="Apte S.S."/>
            <person name="McCulloch D.R."/>
        </authorList>
    </citation>
    <scope>FUNCTION</scope>
    <scope>TISSUE SPECIFICITY</scope>
    <scope>DEVELOPMENTAL STAGE</scope>
    <scope>DISRUPTION PHENOTYPE</scope>
</reference>
<reference key="5">
    <citation type="journal article" date="2016" name="PLoS Biol.">
        <title>ADAMTS5 is a critical regulator of virus-specific T cell immunity.</title>
        <authorList>
            <person name="McMahon M."/>
            <person name="Ye S."/>
            <person name="Izzard L."/>
            <person name="Dlugolenski D."/>
            <person name="Tripp R.A."/>
            <person name="Bean A.G."/>
            <person name="McCulloch D.R."/>
            <person name="Stambas J."/>
        </authorList>
    </citation>
    <scope>FUNCTION</scope>
    <scope>DISRUPTION PHENOTYPE</scope>
</reference>
<reference key="6">
    <citation type="journal article" date="2017" name="Mol. Metab.">
        <title>Loss of ADAMTS5 enhances brown adipose tissue mass and promotes browning of white adipose tissue via CREB signaling.</title>
        <authorList>
            <person name="Bauters D."/>
            <person name="Cobbaut M."/>
            <person name="Geys L."/>
            <person name="Van Lint J."/>
            <person name="Hemmeryckx B."/>
            <person name="Lijnen H.R."/>
        </authorList>
    </citation>
    <scope>FUNCTION</scope>
    <scope>DISRUPTION PHENOTYPE</scope>
</reference>
<evidence type="ECO:0000250" key="1"/>
<evidence type="ECO:0000250" key="2">
    <source>
        <dbReference type="UniProtKB" id="Q9UNA0"/>
    </source>
</evidence>
<evidence type="ECO:0000255" key="3"/>
<evidence type="ECO:0000255" key="4">
    <source>
        <dbReference type="PROSITE-ProRule" id="PRU00210"/>
    </source>
</evidence>
<evidence type="ECO:0000255" key="5">
    <source>
        <dbReference type="PROSITE-ProRule" id="PRU00276"/>
    </source>
</evidence>
<evidence type="ECO:0000255" key="6">
    <source>
        <dbReference type="PROSITE-ProRule" id="PRU10095"/>
    </source>
</evidence>
<evidence type="ECO:0000256" key="7">
    <source>
        <dbReference type="SAM" id="MobiDB-lite"/>
    </source>
</evidence>
<evidence type="ECO:0000269" key="8">
    <source>
    </source>
</evidence>
<evidence type="ECO:0000269" key="9">
    <source>
    </source>
</evidence>
<evidence type="ECO:0000269" key="10">
    <source>
    </source>
</evidence>
<evidence type="ECO:0000269" key="11">
    <source>
    </source>
</evidence>
<evidence type="ECO:0000269" key="12">
    <source>
    </source>
</evidence>
<evidence type="ECO:0000305" key="13"/>
<keyword id="KW-0165">Cleavage on pair of basic residues</keyword>
<keyword id="KW-1015">Disulfide bond</keyword>
<keyword id="KW-0272">Extracellular matrix</keyword>
<keyword id="KW-0325">Glycoprotein</keyword>
<keyword id="KW-0378">Hydrolase</keyword>
<keyword id="KW-0479">Metal-binding</keyword>
<keyword id="KW-0482">Metalloprotease</keyword>
<keyword id="KW-0645">Protease</keyword>
<keyword id="KW-1185">Reference proteome</keyword>
<keyword id="KW-0677">Repeat</keyword>
<keyword id="KW-0964">Secreted</keyword>
<keyword id="KW-0732">Signal</keyword>
<keyword id="KW-0862">Zinc</keyword>
<keyword id="KW-0865">Zymogen</keyword>
<gene>
    <name type="primary">Adamts5</name>
</gene>
<protein>
    <recommendedName>
        <fullName>A disintegrin and metalloproteinase with thrombospondin motifs 5</fullName>
        <shortName>ADAM-TS 5</shortName>
        <shortName>ADAM-TS5</shortName>
        <shortName>ADAMTS-5</shortName>
        <ecNumber>3.4.24.-</ecNumber>
    </recommendedName>
    <alternativeName>
        <fullName>ADMP-2</fullName>
    </alternativeName>
    <alternativeName>
        <fullName>Aggrecanase-2</fullName>
    </alternativeName>
    <alternativeName>
        <fullName>Implantin</fullName>
    </alternativeName>
</protein>
<dbReference type="EC" id="3.4.24.-"/>
<dbReference type="EMBL" id="AF140673">
    <property type="protein sequence ID" value="AAD56356.1"/>
    <property type="molecule type" value="mRNA"/>
</dbReference>
<dbReference type="EMBL" id="BC138619">
    <property type="protein sequence ID" value="AAI38620.1"/>
    <property type="molecule type" value="mRNA"/>
</dbReference>
<dbReference type="EMBL" id="BC138620">
    <property type="protein sequence ID" value="AAI38621.1"/>
    <property type="molecule type" value="mRNA"/>
</dbReference>
<dbReference type="CCDS" id="CCDS28288.1"/>
<dbReference type="RefSeq" id="NP_035912.2">
    <property type="nucleotide sequence ID" value="NM_011782.2"/>
</dbReference>
<dbReference type="SMR" id="Q9R001"/>
<dbReference type="BioGRID" id="204717">
    <property type="interactions" value="2"/>
</dbReference>
<dbReference type="FunCoup" id="Q9R001">
    <property type="interactions" value="257"/>
</dbReference>
<dbReference type="STRING" id="10090.ENSMUSP00000023611"/>
<dbReference type="BindingDB" id="Q9R001"/>
<dbReference type="ChEMBL" id="CHEMBL4879523"/>
<dbReference type="MEROPS" id="M12.225"/>
<dbReference type="GlyCosmos" id="Q9R001">
    <property type="glycosylation" value="7 sites, No reported glycans"/>
</dbReference>
<dbReference type="GlyGen" id="Q9R001">
    <property type="glycosylation" value="7 sites"/>
</dbReference>
<dbReference type="PhosphoSitePlus" id="Q9R001"/>
<dbReference type="PaxDb" id="10090-ENSMUSP00000023611"/>
<dbReference type="PeptideAtlas" id="Q9R001"/>
<dbReference type="ProteomicsDB" id="273586"/>
<dbReference type="Pumba" id="Q9R001"/>
<dbReference type="Antibodypedia" id="986">
    <property type="antibodies" value="498 antibodies from 35 providers"/>
</dbReference>
<dbReference type="DNASU" id="23794"/>
<dbReference type="Ensembl" id="ENSMUST00000023611.7">
    <property type="protein sequence ID" value="ENSMUSP00000023611.6"/>
    <property type="gene ID" value="ENSMUSG00000022894.7"/>
</dbReference>
<dbReference type="GeneID" id="23794"/>
<dbReference type="KEGG" id="mmu:23794"/>
<dbReference type="UCSC" id="uc007ztw.1">
    <property type="organism name" value="mouse"/>
</dbReference>
<dbReference type="AGR" id="MGI:1346321"/>
<dbReference type="CTD" id="11096"/>
<dbReference type="MGI" id="MGI:1346321">
    <property type="gene designation" value="Adamts5"/>
</dbReference>
<dbReference type="VEuPathDB" id="HostDB:ENSMUSG00000022894"/>
<dbReference type="eggNOG" id="KOG3538">
    <property type="taxonomic scope" value="Eukaryota"/>
</dbReference>
<dbReference type="GeneTree" id="ENSGT00940000159090"/>
<dbReference type="HOGENOM" id="CLU_000660_3_0_1"/>
<dbReference type="InParanoid" id="Q9R001"/>
<dbReference type="OMA" id="TPCPPNG"/>
<dbReference type="OrthoDB" id="9936463at2759"/>
<dbReference type="PhylomeDB" id="Q9R001"/>
<dbReference type="TreeFam" id="TF331949"/>
<dbReference type="BRENDA" id="3.4.24.B12">
    <property type="organism ID" value="3474"/>
</dbReference>
<dbReference type="Reactome" id="R-MMU-1474228">
    <property type="pathway name" value="Degradation of the extracellular matrix"/>
</dbReference>
<dbReference type="Reactome" id="R-MMU-5173214">
    <property type="pathway name" value="O-glycosylation of TSR domain-containing proteins"/>
</dbReference>
<dbReference type="BioGRID-ORCS" id="23794">
    <property type="hits" value="2 hits in 76 CRISPR screens"/>
</dbReference>
<dbReference type="ChiTaRS" id="Adamts5">
    <property type="organism name" value="mouse"/>
</dbReference>
<dbReference type="PRO" id="PR:Q9R001"/>
<dbReference type="Proteomes" id="UP000000589">
    <property type="component" value="Chromosome 16"/>
</dbReference>
<dbReference type="RNAct" id="Q9R001">
    <property type="molecule type" value="protein"/>
</dbReference>
<dbReference type="Bgee" id="ENSMUSG00000022894">
    <property type="expression patterns" value="Expressed in decidua and 234 other cell types or tissues"/>
</dbReference>
<dbReference type="GO" id="GO:0005615">
    <property type="term" value="C:extracellular space"/>
    <property type="evidence" value="ECO:0000314"/>
    <property type="project" value="MGI"/>
</dbReference>
<dbReference type="GO" id="GO:0004175">
    <property type="term" value="F:endopeptidase activity"/>
    <property type="evidence" value="ECO:0000315"/>
    <property type="project" value="UniProtKB"/>
</dbReference>
<dbReference type="GO" id="GO:0050840">
    <property type="term" value="F:extracellular matrix binding"/>
    <property type="evidence" value="ECO:0000314"/>
    <property type="project" value="MGI"/>
</dbReference>
<dbReference type="GO" id="GO:0008201">
    <property type="term" value="F:heparin binding"/>
    <property type="evidence" value="ECO:0000314"/>
    <property type="project" value="MGI"/>
</dbReference>
<dbReference type="GO" id="GO:0042802">
    <property type="term" value="F:identical protein binding"/>
    <property type="evidence" value="ECO:0007669"/>
    <property type="project" value="Ensembl"/>
</dbReference>
<dbReference type="GO" id="GO:0004222">
    <property type="term" value="F:metalloendopeptidase activity"/>
    <property type="evidence" value="ECO:0000250"/>
    <property type="project" value="UniProtKB"/>
</dbReference>
<dbReference type="GO" id="GO:0008237">
    <property type="term" value="F:metallopeptidase activity"/>
    <property type="evidence" value="ECO:0000314"/>
    <property type="project" value="UniProtKB"/>
</dbReference>
<dbReference type="GO" id="GO:0008233">
    <property type="term" value="F:peptidase activity"/>
    <property type="evidence" value="ECO:0000250"/>
    <property type="project" value="UniProtKB"/>
</dbReference>
<dbReference type="GO" id="GO:0008270">
    <property type="term" value="F:zinc ion binding"/>
    <property type="evidence" value="ECO:0007669"/>
    <property type="project" value="InterPro"/>
</dbReference>
<dbReference type="GO" id="GO:0003180">
    <property type="term" value="P:aortic valve morphogenesis"/>
    <property type="evidence" value="ECO:0000315"/>
    <property type="project" value="BHF-UCL"/>
</dbReference>
<dbReference type="GO" id="GO:0042742">
    <property type="term" value="P:defense response to bacterium"/>
    <property type="evidence" value="ECO:0000316"/>
    <property type="project" value="MGI"/>
</dbReference>
<dbReference type="GO" id="GO:0003203">
    <property type="term" value="P:endocardial cushion morphogenesis"/>
    <property type="evidence" value="ECO:0000316"/>
    <property type="project" value="BHF-UCL"/>
</dbReference>
<dbReference type="GO" id="GO:0022617">
    <property type="term" value="P:extracellular matrix disassembly"/>
    <property type="evidence" value="ECO:0000315"/>
    <property type="project" value="UniProtKB"/>
</dbReference>
<dbReference type="GO" id="GO:0030198">
    <property type="term" value="P:extracellular matrix organization"/>
    <property type="evidence" value="ECO:0000304"/>
    <property type="project" value="BHF-UCL"/>
</dbReference>
<dbReference type="GO" id="GO:0007520">
    <property type="term" value="P:myoblast fusion"/>
    <property type="evidence" value="ECO:0000315"/>
    <property type="project" value="UniProtKB"/>
</dbReference>
<dbReference type="GO" id="GO:0120163">
    <property type="term" value="P:negative regulation of cold-induced thermogenesis"/>
    <property type="evidence" value="ECO:0000315"/>
    <property type="project" value="YuBioLab"/>
</dbReference>
<dbReference type="GO" id="GO:0006508">
    <property type="term" value="P:proteolysis"/>
    <property type="evidence" value="ECO:0007669"/>
    <property type="project" value="UniProtKB-KW"/>
</dbReference>
<dbReference type="GO" id="GO:0003184">
    <property type="term" value="P:pulmonary valve morphogenesis"/>
    <property type="evidence" value="ECO:0000315"/>
    <property type="project" value="BHF-UCL"/>
</dbReference>
<dbReference type="CDD" id="cd04273">
    <property type="entry name" value="ZnMc_ADAMTS_like"/>
    <property type="match status" value="1"/>
</dbReference>
<dbReference type="FunFam" id="2.20.100.10:FF:000006">
    <property type="entry name" value="A disintegrin and metalloproteinase with thrombospondin motifs 1"/>
    <property type="match status" value="1"/>
</dbReference>
<dbReference type="FunFam" id="2.60.120.830:FF:000001">
    <property type="entry name" value="A disintegrin and metalloproteinase with thrombospondin motifs 1"/>
    <property type="match status" value="1"/>
</dbReference>
<dbReference type="FunFam" id="3.40.390.10:FF:000001">
    <property type="entry name" value="A disintegrin and metalloproteinase with thrombospondin motifs 1"/>
    <property type="match status" value="1"/>
</dbReference>
<dbReference type="FunFam" id="3.40.1620.60:FF:000006">
    <property type="entry name" value="A disintegrin and metalloproteinase with thrombospondin motifs 5"/>
    <property type="match status" value="1"/>
</dbReference>
<dbReference type="Gene3D" id="2.60.120.830">
    <property type="match status" value="1"/>
</dbReference>
<dbReference type="Gene3D" id="3.40.1620.60">
    <property type="match status" value="2"/>
</dbReference>
<dbReference type="Gene3D" id="3.40.390.10">
    <property type="entry name" value="Collagenase (Catalytic Domain)"/>
    <property type="match status" value="1"/>
</dbReference>
<dbReference type="Gene3D" id="2.20.100.10">
    <property type="entry name" value="Thrombospondin type-1 (TSP1) repeat"/>
    <property type="match status" value="2"/>
</dbReference>
<dbReference type="InterPro" id="IPR006586">
    <property type="entry name" value="ADAM_Cys-rich"/>
</dbReference>
<dbReference type="InterPro" id="IPR013273">
    <property type="entry name" value="ADAMTS/ADAMTS-like"/>
</dbReference>
<dbReference type="InterPro" id="IPR050439">
    <property type="entry name" value="ADAMTS_ADAMTS-like"/>
</dbReference>
<dbReference type="InterPro" id="IPR041645">
    <property type="entry name" value="ADAMTS_CR_2"/>
</dbReference>
<dbReference type="InterPro" id="IPR045371">
    <property type="entry name" value="ADAMTS_CR_3"/>
</dbReference>
<dbReference type="InterPro" id="IPR010294">
    <property type="entry name" value="ADAMTS_spacer1"/>
</dbReference>
<dbReference type="InterPro" id="IPR024079">
    <property type="entry name" value="MetalloPept_cat_dom_sf"/>
</dbReference>
<dbReference type="InterPro" id="IPR013276">
    <property type="entry name" value="Pept_M12B_ADAM-TS5"/>
</dbReference>
<dbReference type="InterPro" id="IPR001590">
    <property type="entry name" value="Peptidase_M12B"/>
</dbReference>
<dbReference type="InterPro" id="IPR000884">
    <property type="entry name" value="TSP1_rpt"/>
</dbReference>
<dbReference type="InterPro" id="IPR036383">
    <property type="entry name" value="TSP1_rpt_sf"/>
</dbReference>
<dbReference type="PANTHER" id="PTHR13723:SF37">
    <property type="entry name" value="A DISINTEGRIN AND METALLOPROTEINASE WITH THROMBOSPONDIN MOTIFS 5"/>
    <property type="match status" value="1"/>
</dbReference>
<dbReference type="PANTHER" id="PTHR13723">
    <property type="entry name" value="ADAMTS A DISINTEGRIN AND METALLOPROTEASE WITH THROMBOSPONDIN MOTIFS PROTEASE"/>
    <property type="match status" value="1"/>
</dbReference>
<dbReference type="Pfam" id="PF17771">
    <property type="entry name" value="ADAMTS_CR_2"/>
    <property type="match status" value="1"/>
</dbReference>
<dbReference type="Pfam" id="PF19236">
    <property type="entry name" value="ADAMTS_CR_3"/>
    <property type="match status" value="1"/>
</dbReference>
<dbReference type="Pfam" id="PF05986">
    <property type="entry name" value="ADAMTS_spacer1"/>
    <property type="match status" value="1"/>
</dbReference>
<dbReference type="Pfam" id="PF01421">
    <property type="entry name" value="Reprolysin"/>
    <property type="match status" value="1"/>
</dbReference>
<dbReference type="Pfam" id="PF19030">
    <property type="entry name" value="TSP1_ADAMTS"/>
    <property type="match status" value="1"/>
</dbReference>
<dbReference type="Pfam" id="PF00090">
    <property type="entry name" value="TSP_1"/>
    <property type="match status" value="1"/>
</dbReference>
<dbReference type="PRINTS" id="PR01860">
    <property type="entry name" value="ADAMTS5"/>
</dbReference>
<dbReference type="PRINTS" id="PR01857">
    <property type="entry name" value="ADAMTSFAMILY"/>
</dbReference>
<dbReference type="SMART" id="SM00608">
    <property type="entry name" value="ACR"/>
    <property type="match status" value="1"/>
</dbReference>
<dbReference type="SMART" id="SM00209">
    <property type="entry name" value="TSP1"/>
    <property type="match status" value="2"/>
</dbReference>
<dbReference type="SUPFAM" id="SSF55486">
    <property type="entry name" value="Metalloproteases ('zincins'), catalytic domain"/>
    <property type="match status" value="1"/>
</dbReference>
<dbReference type="SUPFAM" id="SSF82895">
    <property type="entry name" value="TSP-1 type 1 repeat"/>
    <property type="match status" value="2"/>
</dbReference>
<dbReference type="PROSITE" id="PS50215">
    <property type="entry name" value="ADAM_MEPRO"/>
    <property type="match status" value="1"/>
</dbReference>
<dbReference type="PROSITE" id="PS50092">
    <property type="entry name" value="TSP1"/>
    <property type="match status" value="2"/>
</dbReference>
<dbReference type="PROSITE" id="PS00142">
    <property type="entry name" value="ZINC_PROTEASE"/>
    <property type="match status" value="1"/>
</dbReference>
<name>ATS5_MOUSE</name>
<organism>
    <name type="scientific">Mus musculus</name>
    <name type="common">Mouse</name>
    <dbReference type="NCBI Taxonomy" id="10090"/>
    <lineage>
        <taxon>Eukaryota</taxon>
        <taxon>Metazoa</taxon>
        <taxon>Chordata</taxon>
        <taxon>Craniata</taxon>
        <taxon>Vertebrata</taxon>
        <taxon>Euteleostomi</taxon>
        <taxon>Mammalia</taxon>
        <taxon>Eutheria</taxon>
        <taxon>Euarchontoglires</taxon>
        <taxon>Glires</taxon>
        <taxon>Rodentia</taxon>
        <taxon>Myomorpha</taxon>
        <taxon>Muroidea</taxon>
        <taxon>Muridae</taxon>
        <taxon>Murinae</taxon>
        <taxon>Mus</taxon>
        <taxon>Mus</taxon>
    </lineage>
</organism>
<feature type="signal peptide" evidence="3">
    <location>
        <begin position="1"/>
        <end position="21"/>
    </location>
</feature>
<feature type="propeptide" id="PRO_0000029172" evidence="3">
    <location>
        <begin position="22"/>
        <end position="261"/>
    </location>
</feature>
<feature type="chain" id="PRO_0000029173" description="A disintegrin and metalloproteinase with thrombospondin motifs 5">
    <location>
        <begin position="262"/>
        <end position="930"/>
    </location>
</feature>
<feature type="domain" description="Peptidase M12B" evidence="5">
    <location>
        <begin position="267"/>
        <end position="476"/>
    </location>
</feature>
<feature type="domain" description="Disintegrin">
    <location>
        <begin position="485"/>
        <end position="566"/>
    </location>
</feature>
<feature type="domain" description="TSP type-1 1" evidence="4">
    <location>
        <begin position="567"/>
        <end position="622"/>
    </location>
</feature>
<feature type="domain" description="TSP type-1 2" evidence="4">
    <location>
        <begin position="875"/>
        <end position="929"/>
    </location>
</feature>
<feature type="region of interest" description="Disordered" evidence="7">
    <location>
        <begin position="31"/>
        <end position="68"/>
    </location>
</feature>
<feature type="region of interest" description="Disordered" evidence="7">
    <location>
        <begin position="207"/>
        <end position="231"/>
    </location>
</feature>
<feature type="region of interest" description="Spacer">
    <location>
        <begin position="732"/>
        <end position="874"/>
    </location>
</feature>
<feature type="short sequence motif" description="Cysteine switch" evidence="1">
    <location>
        <begin position="207"/>
        <end position="214"/>
    </location>
</feature>
<feature type="compositionally biased region" description="Low complexity" evidence="7">
    <location>
        <begin position="31"/>
        <end position="53"/>
    </location>
</feature>
<feature type="compositionally biased region" description="Polar residues" evidence="7">
    <location>
        <begin position="211"/>
        <end position="225"/>
    </location>
</feature>
<feature type="active site" evidence="5 6">
    <location>
        <position position="411"/>
    </location>
</feature>
<feature type="binding site" description="in inhibited form" evidence="1">
    <location>
        <position position="209"/>
    </location>
    <ligand>
        <name>Zn(2+)</name>
        <dbReference type="ChEBI" id="CHEBI:29105"/>
        <note>catalytic</note>
    </ligand>
</feature>
<feature type="binding site" evidence="2">
    <location>
        <position position="410"/>
    </location>
    <ligand>
        <name>Zn(2+)</name>
        <dbReference type="ChEBI" id="CHEBI:29105"/>
        <note>catalytic</note>
    </ligand>
</feature>
<feature type="binding site" evidence="2">
    <location>
        <position position="414"/>
    </location>
    <ligand>
        <name>Zn(2+)</name>
        <dbReference type="ChEBI" id="CHEBI:29105"/>
        <note>catalytic</note>
    </ligand>
</feature>
<feature type="binding site" evidence="2">
    <location>
        <position position="420"/>
    </location>
    <ligand>
        <name>Zn(2+)</name>
        <dbReference type="ChEBI" id="CHEBI:29105"/>
        <note>catalytic</note>
    </ligand>
</feature>
<feature type="glycosylation site" description="N-linked (GlcNAc...) asparagine" evidence="3">
    <location>
        <position position="498"/>
    </location>
</feature>
<feature type="glycosylation site" description="C-linked (Man) tryptophan" evidence="2">
    <location>
        <position position="570"/>
    </location>
</feature>
<feature type="glycosylation site" description="C-linked (Man) tryptophan" evidence="2">
    <location>
        <position position="573"/>
    </location>
</feature>
<feature type="glycosylation site" description="O-linked (Fuc...) serine" evidence="2">
    <location>
        <position position="582"/>
    </location>
</feature>
<feature type="glycosylation site" description="N-linked (GlcNAc...) asparagine" evidence="3">
    <location>
        <position position="728"/>
    </location>
</feature>
<feature type="glycosylation site" description="N-linked (GlcNAc...) asparagine" evidence="3">
    <location>
        <position position="802"/>
    </location>
</feature>
<feature type="glycosylation site" description="N-linked (GlcNAc...) asparagine" evidence="3">
    <location>
        <position position="807"/>
    </location>
</feature>
<feature type="disulfide bond" evidence="2">
    <location>
        <begin position="342"/>
        <end position="394"/>
    </location>
</feature>
<feature type="disulfide bond" evidence="2">
    <location>
        <begin position="371"/>
        <end position="376"/>
    </location>
</feature>
<feature type="disulfide bond" evidence="2">
    <location>
        <begin position="388"/>
        <end position="471"/>
    </location>
</feature>
<feature type="disulfide bond" evidence="2">
    <location>
        <begin position="426"/>
        <end position="455"/>
    </location>
</feature>
<feature type="disulfide bond" evidence="2">
    <location>
        <begin position="497"/>
        <end position="519"/>
    </location>
</feature>
<feature type="disulfide bond" evidence="2">
    <location>
        <begin position="508"/>
        <end position="529"/>
    </location>
</feature>
<feature type="disulfide bond" evidence="2">
    <location>
        <begin position="514"/>
        <end position="548"/>
    </location>
</feature>
<feature type="disulfide bond" evidence="2">
    <location>
        <begin position="542"/>
        <end position="553"/>
    </location>
</feature>
<feature type="disulfide bond" evidence="1">
    <location>
        <begin position="579"/>
        <end position="616"/>
    </location>
</feature>
<feature type="disulfide bond" evidence="1">
    <location>
        <begin position="583"/>
        <end position="621"/>
    </location>
</feature>
<feature type="disulfide bond" evidence="1">
    <location>
        <begin position="594"/>
        <end position="606"/>
    </location>
</feature>
<feature type="sequence conflict" description="In Ref. 1; AAD56356." evidence="13" ref="1">
    <original>P</original>
    <variation>S</variation>
    <location>
        <position position="7"/>
    </location>
</feature>
<feature type="sequence conflict" description="In Ref. 1; AAD56356." evidence="13" ref="1">
    <original>Q</original>
    <variation>H</variation>
    <location>
        <position position="76"/>
    </location>
</feature>
<feature type="sequence conflict" description="In Ref. 1; AAD56356." evidence="13" ref="1">
    <original>T</original>
    <variation>P</variation>
    <location>
        <position position="772"/>
    </location>
</feature>
<feature type="sequence conflict" description="In Ref. 1; AAD56356." evidence="13" ref="1">
    <original>D</original>
    <variation>G</variation>
    <location>
        <position position="844"/>
    </location>
</feature>